<accession>Q0HSF0</accession>
<evidence type="ECO:0000255" key="1">
    <source>
        <dbReference type="HAMAP-Rule" id="MF_01380"/>
    </source>
</evidence>
<comment type="function">
    <text evidence="1">Required for insertion of 4Fe-4S clusters for at least IspG.</text>
</comment>
<comment type="cofactor">
    <cofactor evidence="1">
        <name>iron-sulfur cluster</name>
        <dbReference type="ChEBI" id="CHEBI:30408"/>
    </cofactor>
    <text evidence="1">Binds 1 iron-sulfur cluster per subunit.</text>
</comment>
<comment type="subunit">
    <text evidence="1">Homodimer.</text>
</comment>
<comment type="similarity">
    <text evidence="1">Belongs to the HesB/IscA family.</text>
</comment>
<reference key="1">
    <citation type="submission" date="2006-08" db="EMBL/GenBank/DDBJ databases">
        <title>Complete sequence of chromosome 1 of Shewanella sp. MR-7.</title>
        <authorList>
            <person name="Copeland A."/>
            <person name="Lucas S."/>
            <person name="Lapidus A."/>
            <person name="Barry K."/>
            <person name="Detter J.C."/>
            <person name="Glavina del Rio T."/>
            <person name="Hammon N."/>
            <person name="Israni S."/>
            <person name="Dalin E."/>
            <person name="Tice H."/>
            <person name="Pitluck S."/>
            <person name="Kiss H."/>
            <person name="Brettin T."/>
            <person name="Bruce D."/>
            <person name="Han C."/>
            <person name="Tapia R."/>
            <person name="Gilna P."/>
            <person name="Schmutz J."/>
            <person name="Larimer F."/>
            <person name="Land M."/>
            <person name="Hauser L."/>
            <person name="Kyrpides N."/>
            <person name="Mikhailova N."/>
            <person name="Nealson K."/>
            <person name="Konstantinidis K."/>
            <person name="Klappenbach J."/>
            <person name="Tiedje J."/>
            <person name="Richardson P."/>
        </authorList>
    </citation>
    <scope>NUCLEOTIDE SEQUENCE [LARGE SCALE GENOMIC DNA]</scope>
    <source>
        <strain>MR-7</strain>
    </source>
</reference>
<keyword id="KW-0408">Iron</keyword>
<keyword id="KW-0411">Iron-sulfur</keyword>
<keyword id="KW-0479">Metal-binding</keyword>
<name>ERPA_SHESR</name>
<dbReference type="EMBL" id="CP000444">
    <property type="protein sequence ID" value="ABI43955.1"/>
    <property type="molecule type" value="Genomic_DNA"/>
</dbReference>
<dbReference type="SMR" id="Q0HSF0"/>
<dbReference type="KEGG" id="shm:Shewmr7_2971"/>
<dbReference type="HOGENOM" id="CLU_069054_5_3_6"/>
<dbReference type="GO" id="GO:0005829">
    <property type="term" value="C:cytosol"/>
    <property type="evidence" value="ECO:0007669"/>
    <property type="project" value="TreeGrafter"/>
</dbReference>
<dbReference type="GO" id="GO:0051537">
    <property type="term" value="F:2 iron, 2 sulfur cluster binding"/>
    <property type="evidence" value="ECO:0007669"/>
    <property type="project" value="UniProtKB-ARBA"/>
</dbReference>
<dbReference type="GO" id="GO:0051539">
    <property type="term" value="F:4 iron, 4 sulfur cluster binding"/>
    <property type="evidence" value="ECO:0007669"/>
    <property type="project" value="TreeGrafter"/>
</dbReference>
<dbReference type="GO" id="GO:0005506">
    <property type="term" value="F:iron ion binding"/>
    <property type="evidence" value="ECO:0007669"/>
    <property type="project" value="UniProtKB-UniRule"/>
</dbReference>
<dbReference type="GO" id="GO:0016226">
    <property type="term" value="P:iron-sulfur cluster assembly"/>
    <property type="evidence" value="ECO:0007669"/>
    <property type="project" value="UniProtKB-UniRule"/>
</dbReference>
<dbReference type="FunFam" id="2.60.300.12:FF:000002">
    <property type="entry name" value="Iron-sulfur cluster insertion protein ErpA"/>
    <property type="match status" value="1"/>
</dbReference>
<dbReference type="Gene3D" id="2.60.300.12">
    <property type="entry name" value="HesB-like domain"/>
    <property type="match status" value="1"/>
</dbReference>
<dbReference type="HAMAP" id="MF_01380">
    <property type="entry name" value="Fe_S_insert_ErpA"/>
    <property type="match status" value="1"/>
</dbReference>
<dbReference type="InterPro" id="IPR000361">
    <property type="entry name" value="FeS_biogenesis"/>
</dbReference>
<dbReference type="InterPro" id="IPR016092">
    <property type="entry name" value="FeS_cluster_insertion"/>
</dbReference>
<dbReference type="InterPro" id="IPR017870">
    <property type="entry name" value="FeS_cluster_insertion_CS"/>
</dbReference>
<dbReference type="InterPro" id="IPR023063">
    <property type="entry name" value="FeS_cluster_insertion_RrpA"/>
</dbReference>
<dbReference type="InterPro" id="IPR035903">
    <property type="entry name" value="HesB-like_dom_sf"/>
</dbReference>
<dbReference type="NCBIfam" id="TIGR00049">
    <property type="entry name" value="iron-sulfur cluster assembly accessory protein"/>
    <property type="match status" value="1"/>
</dbReference>
<dbReference type="NCBIfam" id="NF010147">
    <property type="entry name" value="PRK13623.1"/>
    <property type="match status" value="1"/>
</dbReference>
<dbReference type="PANTHER" id="PTHR43011">
    <property type="entry name" value="IRON-SULFUR CLUSTER ASSEMBLY 2 HOMOLOG, MITOCHONDRIAL"/>
    <property type="match status" value="1"/>
</dbReference>
<dbReference type="PANTHER" id="PTHR43011:SF1">
    <property type="entry name" value="IRON-SULFUR CLUSTER ASSEMBLY 2 HOMOLOG, MITOCHONDRIAL"/>
    <property type="match status" value="1"/>
</dbReference>
<dbReference type="Pfam" id="PF01521">
    <property type="entry name" value="Fe-S_biosyn"/>
    <property type="match status" value="1"/>
</dbReference>
<dbReference type="SUPFAM" id="SSF89360">
    <property type="entry name" value="HesB-like domain"/>
    <property type="match status" value="1"/>
</dbReference>
<dbReference type="PROSITE" id="PS01152">
    <property type="entry name" value="HESB"/>
    <property type="match status" value="1"/>
</dbReference>
<feature type="chain" id="PRO_0000311557" description="Iron-sulfur cluster insertion protein ErpA">
    <location>
        <begin position="1"/>
        <end position="116"/>
    </location>
</feature>
<feature type="binding site" evidence="1">
    <location>
        <position position="44"/>
    </location>
    <ligand>
        <name>iron-sulfur cluster</name>
        <dbReference type="ChEBI" id="CHEBI:30408"/>
    </ligand>
</feature>
<feature type="binding site" evidence="1">
    <location>
        <position position="108"/>
    </location>
    <ligand>
        <name>iron-sulfur cluster</name>
        <dbReference type="ChEBI" id="CHEBI:30408"/>
    </ligand>
</feature>
<feature type="binding site" evidence="1">
    <location>
        <position position="110"/>
    </location>
    <ligand>
        <name>iron-sulfur cluster</name>
        <dbReference type="ChEBI" id="CHEBI:30408"/>
    </ligand>
</feature>
<protein>
    <recommendedName>
        <fullName evidence="1">Iron-sulfur cluster insertion protein ErpA</fullName>
    </recommendedName>
</protein>
<gene>
    <name evidence="1" type="primary">erpA</name>
    <name type="ordered locus">Shewmr7_2971</name>
</gene>
<organism>
    <name type="scientific">Shewanella sp. (strain MR-7)</name>
    <dbReference type="NCBI Taxonomy" id="60481"/>
    <lineage>
        <taxon>Bacteria</taxon>
        <taxon>Pseudomonadati</taxon>
        <taxon>Pseudomonadota</taxon>
        <taxon>Gammaproteobacteria</taxon>
        <taxon>Alteromonadales</taxon>
        <taxon>Shewanellaceae</taxon>
        <taxon>Shewanella</taxon>
    </lineage>
</organism>
<sequence length="116" mass="12363">MTDQADAAMPIKFTDAAAAKVKGLLEEEQNPALKLRVYVTGGGCSGFQYGFTFDEKVNEGDFTVEKQGVQLVVDPMSLQYLVGGEVDYTSGLEGSRFFVKNPNATTTCGCGASFSV</sequence>
<proteinExistence type="inferred from homology"/>